<comment type="function">
    <text evidence="1">Bifunctional serine/threonine kinase and phosphorylase involved in the regulation of the pyruvate, phosphate dikinase (PPDK) by catalyzing its phosphorylation/dephosphorylation.</text>
</comment>
<comment type="catalytic activity">
    <reaction evidence="1">
        <text>N(tele)-phospho-L-histidyl/L-threonyl-[pyruvate, phosphate dikinase] + ADP = N(tele)-phospho-L-histidyl/O-phospho-L-threonyl-[pyruvate, phosphate dikinase] + AMP + H(+)</text>
        <dbReference type="Rhea" id="RHEA:43692"/>
        <dbReference type="Rhea" id="RHEA-COMP:10650"/>
        <dbReference type="Rhea" id="RHEA-COMP:10651"/>
        <dbReference type="ChEBI" id="CHEBI:15378"/>
        <dbReference type="ChEBI" id="CHEBI:30013"/>
        <dbReference type="ChEBI" id="CHEBI:61977"/>
        <dbReference type="ChEBI" id="CHEBI:83586"/>
        <dbReference type="ChEBI" id="CHEBI:456215"/>
        <dbReference type="ChEBI" id="CHEBI:456216"/>
        <dbReference type="EC" id="2.7.11.32"/>
    </reaction>
</comment>
<comment type="catalytic activity">
    <reaction evidence="1">
        <text>N(tele)-phospho-L-histidyl/O-phospho-L-threonyl-[pyruvate, phosphate dikinase] + phosphate + H(+) = N(tele)-phospho-L-histidyl/L-threonyl-[pyruvate, phosphate dikinase] + diphosphate</text>
        <dbReference type="Rhea" id="RHEA:43696"/>
        <dbReference type="Rhea" id="RHEA-COMP:10650"/>
        <dbReference type="Rhea" id="RHEA-COMP:10651"/>
        <dbReference type="ChEBI" id="CHEBI:15378"/>
        <dbReference type="ChEBI" id="CHEBI:30013"/>
        <dbReference type="ChEBI" id="CHEBI:33019"/>
        <dbReference type="ChEBI" id="CHEBI:43474"/>
        <dbReference type="ChEBI" id="CHEBI:61977"/>
        <dbReference type="ChEBI" id="CHEBI:83586"/>
        <dbReference type="EC" id="2.7.4.27"/>
    </reaction>
</comment>
<comment type="similarity">
    <text evidence="1">Belongs to the pyruvate, phosphate/water dikinase regulatory protein family. PDRP subfamily.</text>
</comment>
<protein>
    <recommendedName>
        <fullName evidence="1">Putative pyruvate, phosphate dikinase regulatory protein</fullName>
        <shortName evidence="1">PPDK regulatory protein</shortName>
        <ecNumber evidence="1">2.7.11.32</ecNumber>
        <ecNumber evidence="1">2.7.4.27</ecNumber>
    </recommendedName>
</protein>
<gene>
    <name type="ordered locus">amb4549</name>
</gene>
<keyword id="KW-0418">Kinase</keyword>
<keyword id="KW-0547">Nucleotide-binding</keyword>
<keyword id="KW-0723">Serine/threonine-protein kinase</keyword>
<keyword id="KW-0808">Transferase</keyword>
<dbReference type="EC" id="2.7.11.32" evidence="1"/>
<dbReference type="EC" id="2.7.4.27" evidence="1"/>
<dbReference type="EMBL" id="AP007255">
    <property type="protein sequence ID" value="BAE53353.1"/>
    <property type="molecule type" value="Genomic_DNA"/>
</dbReference>
<dbReference type="SMR" id="Q2VYH2"/>
<dbReference type="STRING" id="342108.amb4549"/>
<dbReference type="KEGG" id="mag:amb4549"/>
<dbReference type="HOGENOM" id="CLU_046206_2_0_5"/>
<dbReference type="Proteomes" id="UP000007058">
    <property type="component" value="Chromosome"/>
</dbReference>
<dbReference type="GO" id="GO:0043531">
    <property type="term" value="F:ADP binding"/>
    <property type="evidence" value="ECO:0007669"/>
    <property type="project" value="UniProtKB-UniRule"/>
</dbReference>
<dbReference type="GO" id="GO:0005524">
    <property type="term" value="F:ATP binding"/>
    <property type="evidence" value="ECO:0007669"/>
    <property type="project" value="InterPro"/>
</dbReference>
<dbReference type="GO" id="GO:0016776">
    <property type="term" value="F:phosphotransferase activity, phosphate group as acceptor"/>
    <property type="evidence" value="ECO:0007669"/>
    <property type="project" value="UniProtKB-UniRule"/>
</dbReference>
<dbReference type="GO" id="GO:0004674">
    <property type="term" value="F:protein serine/threonine kinase activity"/>
    <property type="evidence" value="ECO:0007669"/>
    <property type="project" value="UniProtKB-UniRule"/>
</dbReference>
<dbReference type="HAMAP" id="MF_00921">
    <property type="entry name" value="PDRP"/>
    <property type="match status" value="1"/>
</dbReference>
<dbReference type="InterPro" id="IPR005177">
    <property type="entry name" value="Kinase-pyrophosphorylase"/>
</dbReference>
<dbReference type="InterPro" id="IPR026565">
    <property type="entry name" value="PPDK_reg"/>
</dbReference>
<dbReference type="NCBIfam" id="NF003742">
    <property type="entry name" value="PRK05339.1"/>
    <property type="match status" value="1"/>
</dbReference>
<dbReference type="PANTHER" id="PTHR31756">
    <property type="entry name" value="PYRUVATE, PHOSPHATE DIKINASE REGULATORY PROTEIN 1, CHLOROPLASTIC"/>
    <property type="match status" value="1"/>
</dbReference>
<dbReference type="PANTHER" id="PTHR31756:SF3">
    <property type="entry name" value="PYRUVATE, PHOSPHATE DIKINASE REGULATORY PROTEIN 1, CHLOROPLASTIC"/>
    <property type="match status" value="1"/>
</dbReference>
<dbReference type="Pfam" id="PF03618">
    <property type="entry name" value="Kinase-PPPase"/>
    <property type="match status" value="1"/>
</dbReference>
<name>PDRP_PARM1</name>
<reference key="1">
    <citation type="journal article" date="2005" name="DNA Res.">
        <title>Complete genome sequence of the facultative anaerobic magnetotactic bacterium Magnetospirillum sp. strain AMB-1.</title>
        <authorList>
            <person name="Matsunaga T."/>
            <person name="Okamura Y."/>
            <person name="Fukuda Y."/>
            <person name="Wahyudi A.T."/>
            <person name="Murase Y."/>
            <person name="Takeyama H."/>
        </authorList>
    </citation>
    <scope>NUCLEOTIDE SEQUENCE [LARGE SCALE GENOMIC DNA]</scope>
    <source>
        <strain>ATCC 700264 / AMB-1</strain>
    </source>
</reference>
<evidence type="ECO:0000255" key="1">
    <source>
        <dbReference type="HAMAP-Rule" id="MF_00921"/>
    </source>
</evidence>
<accession>Q2VYH2</accession>
<feature type="chain" id="PRO_0000316696" description="Putative pyruvate, phosphate dikinase regulatory protein">
    <location>
        <begin position="1"/>
        <end position="311"/>
    </location>
</feature>
<feature type="binding site" evidence="1">
    <location>
        <begin position="180"/>
        <end position="187"/>
    </location>
    <ligand>
        <name>ADP</name>
        <dbReference type="ChEBI" id="CHEBI:456216"/>
    </ligand>
</feature>
<sequence length="311" mass="34664">MPPWNRGQWGANFPPPAGTPPYPRSCGLSTGMKNFHLHLVSDATGETVTSVARACLVQFEGVQPIQHNWWLVRTQGQVERVIAGIEDNPGLVFFTLVDGAVRGLLEEACRHRGIPCISLLDPVMAGLSAFLGVEVTALPGRQYQLDAEYFRRIDAMQFTLSHDDGQLIELADQADIVLVGVSRSSKTPTCMYLANRGFKCANYPLVPGVPLPPELERAKKPLVVGLTKDPKSLSDIRRARLRLLNQEEEADYAQFEKVKEEVQQARRIFSRLGWPVVDVTRRSIEEASATIIQLYERHLEKRGLKAEVLPS</sequence>
<organism>
    <name type="scientific">Paramagnetospirillum magneticum (strain ATCC 700264 / AMB-1)</name>
    <name type="common">Magnetospirillum magneticum</name>
    <dbReference type="NCBI Taxonomy" id="342108"/>
    <lineage>
        <taxon>Bacteria</taxon>
        <taxon>Pseudomonadati</taxon>
        <taxon>Pseudomonadota</taxon>
        <taxon>Alphaproteobacteria</taxon>
        <taxon>Rhodospirillales</taxon>
        <taxon>Magnetospirillaceae</taxon>
        <taxon>Paramagnetospirillum</taxon>
    </lineage>
</organism>
<proteinExistence type="inferred from homology"/>